<organism>
    <name type="scientific">Rickettsia felis (strain ATCC VR-1525 / URRWXCal2)</name>
    <name type="common">Rickettsia azadi</name>
    <dbReference type="NCBI Taxonomy" id="315456"/>
    <lineage>
        <taxon>Bacteria</taxon>
        <taxon>Pseudomonadati</taxon>
        <taxon>Pseudomonadota</taxon>
        <taxon>Alphaproteobacteria</taxon>
        <taxon>Rickettsiales</taxon>
        <taxon>Rickettsiaceae</taxon>
        <taxon>Rickettsieae</taxon>
        <taxon>Rickettsia</taxon>
        <taxon>spotted fever group</taxon>
    </lineage>
</organism>
<protein>
    <recommendedName>
        <fullName evidence="2">NADH-quinone oxidoreductase subunit B</fullName>
        <ecNumber evidence="2">7.1.1.-</ecNumber>
    </recommendedName>
    <alternativeName>
        <fullName evidence="2">NADH dehydrogenase I subunit B</fullName>
    </alternativeName>
    <alternativeName>
        <fullName evidence="2">NDH-1 subunit B</fullName>
    </alternativeName>
</protein>
<feature type="chain" id="PRO_0000287852" description="NADH-quinone oxidoreductase subunit B">
    <location>
        <begin position="1"/>
        <end position="174"/>
    </location>
</feature>
<feature type="binding site" evidence="2">
    <location>
        <position position="47"/>
    </location>
    <ligand>
        <name>[4Fe-4S] cluster</name>
        <dbReference type="ChEBI" id="CHEBI:49883"/>
    </ligand>
</feature>
<feature type="binding site" evidence="2">
    <location>
        <position position="48"/>
    </location>
    <ligand>
        <name>[4Fe-4S] cluster</name>
        <dbReference type="ChEBI" id="CHEBI:49883"/>
    </ligand>
</feature>
<feature type="binding site" evidence="2">
    <location>
        <position position="112"/>
    </location>
    <ligand>
        <name>[4Fe-4S] cluster</name>
        <dbReference type="ChEBI" id="CHEBI:49883"/>
    </ligand>
</feature>
<feature type="binding site" evidence="2">
    <location>
        <position position="142"/>
    </location>
    <ligand>
        <name>[4Fe-4S] cluster</name>
        <dbReference type="ChEBI" id="CHEBI:49883"/>
    </ligand>
</feature>
<proteinExistence type="inferred from homology"/>
<comment type="function">
    <text evidence="1">NDH-1 shuttles electrons from NADH, via FMN and iron-sulfur (Fe-S) centers, to quinones in the respiratory chain. Couples the redox reaction to proton translocation (for every two electrons transferred, four hydrogen ions are translocated across the cytoplasmic membrane), and thus conserves the redox energy in a proton gradient (By similarity).</text>
</comment>
<comment type="catalytic activity">
    <reaction evidence="2">
        <text>a quinone + NADH + 5 H(+)(in) = a quinol + NAD(+) + 4 H(+)(out)</text>
        <dbReference type="Rhea" id="RHEA:57888"/>
        <dbReference type="ChEBI" id="CHEBI:15378"/>
        <dbReference type="ChEBI" id="CHEBI:24646"/>
        <dbReference type="ChEBI" id="CHEBI:57540"/>
        <dbReference type="ChEBI" id="CHEBI:57945"/>
        <dbReference type="ChEBI" id="CHEBI:132124"/>
    </reaction>
</comment>
<comment type="cofactor">
    <cofactor evidence="2">
        <name>[4Fe-4S] cluster</name>
        <dbReference type="ChEBI" id="CHEBI:49883"/>
    </cofactor>
    <text evidence="2">Binds 1 [4Fe-4S] cluster.</text>
</comment>
<comment type="subunit">
    <text evidence="2">NDH-1 is composed of 14 different subunits. Subunits NuoB, C, D, E, F, and G constitute the peripheral sector of the complex.</text>
</comment>
<comment type="subcellular location">
    <subcellularLocation>
        <location evidence="2">Cell inner membrane</location>
        <topology evidence="2">Peripheral membrane protein</topology>
        <orientation evidence="2">Cytoplasmic side</orientation>
    </subcellularLocation>
</comment>
<comment type="similarity">
    <text evidence="2">Belongs to the complex I 20 kDa subunit family.</text>
</comment>
<accession>Q4UM06</accession>
<dbReference type="EC" id="7.1.1.-" evidence="2"/>
<dbReference type="EMBL" id="CP000053">
    <property type="protein sequence ID" value="AAY61417.1"/>
    <property type="molecule type" value="Genomic_DNA"/>
</dbReference>
<dbReference type="SMR" id="Q4UM06"/>
<dbReference type="STRING" id="315456.RF_0566"/>
<dbReference type="KEGG" id="rfe:RF_0566"/>
<dbReference type="eggNOG" id="COG0377">
    <property type="taxonomic scope" value="Bacteria"/>
</dbReference>
<dbReference type="HOGENOM" id="CLU_055737_7_3_5"/>
<dbReference type="OrthoDB" id="9786737at2"/>
<dbReference type="Proteomes" id="UP000008548">
    <property type="component" value="Chromosome"/>
</dbReference>
<dbReference type="GO" id="GO:0005886">
    <property type="term" value="C:plasma membrane"/>
    <property type="evidence" value="ECO:0007669"/>
    <property type="project" value="UniProtKB-SubCell"/>
</dbReference>
<dbReference type="GO" id="GO:0045271">
    <property type="term" value="C:respiratory chain complex I"/>
    <property type="evidence" value="ECO:0007669"/>
    <property type="project" value="TreeGrafter"/>
</dbReference>
<dbReference type="GO" id="GO:0051539">
    <property type="term" value="F:4 iron, 4 sulfur cluster binding"/>
    <property type="evidence" value="ECO:0007669"/>
    <property type="project" value="UniProtKB-KW"/>
</dbReference>
<dbReference type="GO" id="GO:0005506">
    <property type="term" value="F:iron ion binding"/>
    <property type="evidence" value="ECO:0007669"/>
    <property type="project" value="UniProtKB-UniRule"/>
</dbReference>
<dbReference type="GO" id="GO:0008137">
    <property type="term" value="F:NADH dehydrogenase (ubiquinone) activity"/>
    <property type="evidence" value="ECO:0007669"/>
    <property type="project" value="InterPro"/>
</dbReference>
<dbReference type="GO" id="GO:0050136">
    <property type="term" value="F:NADH:ubiquinone reductase (non-electrogenic) activity"/>
    <property type="evidence" value="ECO:0007669"/>
    <property type="project" value="UniProtKB-UniRule"/>
</dbReference>
<dbReference type="GO" id="GO:0048038">
    <property type="term" value="F:quinone binding"/>
    <property type="evidence" value="ECO:0007669"/>
    <property type="project" value="UniProtKB-KW"/>
</dbReference>
<dbReference type="GO" id="GO:0009060">
    <property type="term" value="P:aerobic respiration"/>
    <property type="evidence" value="ECO:0007669"/>
    <property type="project" value="TreeGrafter"/>
</dbReference>
<dbReference type="GO" id="GO:0015990">
    <property type="term" value="P:electron transport coupled proton transport"/>
    <property type="evidence" value="ECO:0007669"/>
    <property type="project" value="TreeGrafter"/>
</dbReference>
<dbReference type="FunFam" id="3.40.50.12280:FF:000001">
    <property type="entry name" value="NADH-quinone oxidoreductase subunit B 2"/>
    <property type="match status" value="1"/>
</dbReference>
<dbReference type="Gene3D" id="3.40.50.12280">
    <property type="match status" value="1"/>
</dbReference>
<dbReference type="HAMAP" id="MF_01356">
    <property type="entry name" value="NDH1_NuoB"/>
    <property type="match status" value="1"/>
</dbReference>
<dbReference type="InterPro" id="IPR006137">
    <property type="entry name" value="NADH_UbQ_OxRdtase-like_20kDa"/>
</dbReference>
<dbReference type="InterPro" id="IPR006138">
    <property type="entry name" value="NADH_UQ_OxRdtase_20Kd_su"/>
</dbReference>
<dbReference type="NCBIfam" id="TIGR01957">
    <property type="entry name" value="nuoB_fam"/>
    <property type="match status" value="1"/>
</dbReference>
<dbReference type="NCBIfam" id="NF005012">
    <property type="entry name" value="PRK06411.1"/>
    <property type="match status" value="1"/>
</dbReference>
<dbReference type="PANTHER" id="PTHR11995">
    <property type="entry name" value="NADH DEHYDROGENASE"/>
    <property type="match status" value="1"/>
</dbReference>
<dbReference type="PANTHER" id="PTHR11995:SF14">
    <property type="entry name" value="NADH DEHYDROGENASE [UBIQUINONE] IRON-SULFUR PROTEIN 7, MITOCHONDRIAL"/>
    <property type="match status" value="1"/>
</dbReference>
<dbReference type="Pfam" id="PF01058">
    <property type="entry name" value="Oxidored_q6"/>
    <property type="match status" value="1"/>
</dbReference>
<dbReference type="SUPFAM" id="SSF56770">
    <property type="entry name" value="HydA/Nqo6-like"/>
    <property type="match status" value="1"/>
</dbReference>
<dbReference type="PROSITE" id="PS01150">
    <property type="entry name" value="COMPLEX1_20K"/>
    <property type="match status" value="1"/>
</dbReference>
<sequence length="174" mass="19639">MKHSFYQEDELLNNELSNRGFLLTKVDDVIGWARANSLWPMTFGLACCAVEMMQAAASRYDMDRFGMLFRPSPRQSDLMIVAGTLTNKMAPALRKVYDQMAEPKWVLSMGSCANGGGYYHFSYSVVRGCDRIVPVDVYVPGCPPTAEALIYGLMQLQKKIKRTTGFKYDARQTH</sequence>
<name>NUOB_RICFE</name>
<keyword id="KW-0004">4Fe-4S</keyword>
<keyword id="KW-0997">Cell inner membrane</keyword>
<keyword id="KW-1003">Cell membrane</keyword>
<keyword id="KW-0408">Iron</keyword>
<keyword id="KW-0411">Iron-sulfur</keyword>
<keyword id="KW-0472">Membrane</keyword>
<keyword id="KW-0479">Metal-binding</keyword>
<keyword id="KW-0520">NAD</keyword>
<keyword id="KW-0874">Quinone</keyword>
<keyword id="KW-1278">Translocase</keyword>
<keyword id="KW-0813">Transport</keyword>
<keyword id="KW-0830">Ubiquinone</keyword>
<evidence type="ECO:0000250" key="1"/>
<evidence type="ECO:0000255" key="2">
    <source>
        <dbReference type="HAMAP-Rule" id="MF_01356"/>
    </source>
</evidence>
<reference key="1">
    <citation type="journal article" date="2005" name="PLoS Biol.">
        <title>The genome sequence of Rickettsia felis identifies the first putative conjugative plasmid in an obligate intracellular parasite.</title>
        <authorList>
            <person name="Ogata H."/>
            <person name="Renesto P."/>
            <person name="Audic S."/>
            <person name="Robert C."/>
            <person name="Blanc G."/>
            <person name="Fournier P.-E."/>
            <person name="Parinello H."/>
            <person name="Claverie J.-M."/>
            <person name="Raoult D."/>
        </authorList>
    </citation>
    <scope>NUCLEOTIDE SEQUENCE [LARGE SCALE GENOMIC DNA]</scope>
    <source>
        <strain>ATCC VR-1525 / URRWXCal2</strain>
    </source>
</reference>
<gene>
    <name evidence="2" type="primary">nuoB</name>
    <name type="ordered locus">RF_0566</name>
</gene>